<protein>
    <recommendedName>
        <fullName evidence="1">UPF0173 metal-dependent hydrolase SAV1707</fullName>
    </recommendedName>
</protein>
<accession>P67325</accession>
<accession>Q99TF6</accession>
<comment type="similarity">
    <text evidence="1">Belongs to the UPF0173 family.</text>
</comment>
<keyword id="KW-0378">Hydrolase</keyword>
<sequence>MKLSFHGQSTIYLEGNNKKVIVDPFISNNPKCDLNIETVQVDYIVLTHGHFDHFGDVVELAKKTGATVIGSAEMADYLSSYHGVENVHGMNIGGKANFDFGSVKFVQAFHSSSFTHENGIPVYLGMPMGIVFEVEGKTIYHTGDTGLFSDMSLIAKRHPVDVCFVPIGDNFTMGIDDASYAINEFIKPKISVPIHYDTFPLIEQDPQQFKDAVNVGDVQILKPGESVQF</sequence>
<evidence type="ECO:0000255" key="1">
    <source>
        <dbReference type="HAMAP-Rule" id="MF_00457"/>
    </source>
</evidence>
<name>Y1707_STAAM</name>
<gene>
    <name type="ordered locus">SAV1707</name>
</gene>
<feature type="chain" id="PRO_0000156382" description="UPF0173 metal-dependent hydrolase SAV1707">
    <location>
        <begin position="1"/>
        <end position="229"/>
    </location>
</feature>
<proteinExistence type="inferred from homology"/>
<reference key="1">
    <citation type="journal article" date="2001" name="Lancet">
        <title>Whole genome sequencing of meticillin-resistant Staphylococcus aureus.</title>
        <authorList>
            <person name="Kuroda M."/>
            <person name="Ohta T."/>
            <person name="Uchiyama I."/>
            <person name="Baba T."/>
            <person name="Yuzawa H."/>
            <person name="Kobayashi I."/>
            <person name="Cui L."/>
            <person name="Oguchi A."/>
            <person name="Aoki K."/>
            <person name="Nagai Y."/>
            <person name="Lian J.-Q."/>
            <person name="Ito T."/>
            <person name="Kanamori M."/>
            <person name="Matsumaru H."/>
            <person name="Maruyama A."/>
            <person name="Murakami H."/>
            <person name="Hosoyama A."/>
            <person name="Mizutani-Ui Y."/>
            <person name="Takahashi N.K."/>
            <person name="Sawano T."/>
            <person name="Inoue R."/>
            <person name="Kaito C."/>
            <person name="Sekimizu K."/>
            <person name="Hirakawa H."/>
            <person name="Kuhara S."/>
            <person name="Goto S."/>
            <person name="Yabuzaki J."/>
            <person name="Kanehisa M."/>
            <person name="Yamashita A."/>
            <person name="Oshima K."/>
            <person name="Furuya K."/>
            <person name="Yoshino C."/>
            <person name="Shiba T."/>
            <person name="Hattori M."/>
            <person name="Ogasawara N."/>
            <person name="Hayashi H."/>
            <person name="Hiramatsu K."/>
        </authorList>
    </citation>
    <scope>NUCLEOTIDE SEQUENCE [LARGE SCALE GENOMIC DNA]</scope>
    <source>
        <strain>Mu50 / ATCC 700699</strain>
    </source>
</reference>
<organism>
    <name type="scientific">Staphylococcus aureus (strain Mu50 / ATCC 700699)</name>
    <dbReference type="NCBI Taxonomy" id="158878"/>
    <lineage>
        <taxon>Bacteria</taxon>
        <taxon>Bacillati</taxon>
        <taxon>Bacillota</taxon>
        <taxon>Bacilli</taxon>
        <taxon>Bacillales</taxon>
        <taxon>Staphylococcaceae</taxon>
        <taxon>Staphylococcus</taxon>
    </lineage>
</organism>
<dbReference type="EMBL" id="BA000017">
    <property type="protein sequence ID" value="BAB57869.1"/>
    <property type="molecule type" value="Genomic_DNA"/>
</dbReference>
<dbReference type="RefSeq" id="WP_000777188.1">
    <property type="nucleotide sequence ID" value="NC_002758.2"/>
</dbReference>
<dbReference type="SMR" id="P67325"/>
<dbReference type="KEGG" id="sav:SAV1707"/>
<dbReference type="HOGENOM" id="CLU_070010_4_1_9"/>
<dbReference type="PhylomeDB" id="P67325"/>
<dbReference type="Proteomes" id="UP000002481">
    <property type="component" value="Chromosome"/>
</dbReference>
<dbReference type="GO" id="GO:0016787">
    <property type="term" value="F:hydrolase activity"/>
    <property type="evidence" value="ECO:0007669"/>
    <property type="project" value="UniProtKB-UniRule"/>
</dbReference>
<dbReference type="CDD" id="cd06262">
    <property type="entry name" value="metallo-hydrolase-like_MBL-fold"/>
    <property type="match status" value="1"/>
</dbReference>
<dbReference type="Gene3D" id="3.60.15.10">
    <property type="entry name" value="Ribonuclease Z/Hydroxyacylglutathione hydrolase-like"/>
    <property type="match status" value="1"/>
</dbReference>
<dbReference type="HAMAP" id="MF_00457">
    <property type="entry name" value="UPF0173"/>
    <property type="match status" value="1"/>
</dbReference>
<dbReference type="InterPro" id="IPR001279">
    <property type="entry name" value="Metallo-B-lactamas"/>
</dbReference>
<dbReference type="InterPro" id="IPR036866">
    <property type="entry name" value="RibonucZ/Hydroxyglut_hydro"/>
</dbReference>
<dbReference type="InterPro" id="IPR022877">
    <property type="entry name" value="UPF0173"/>
</dbReference>
<dbReference type="InterPro" id="IPR050114">
    <property type="entry name" value="UPF0173_UPF0282_UlaG_hydrolase"/>
</dbReference>
<dbReference type="NCBIfam" id="NF001911">
    <property type="entry name" value="PRK00685.1"/>
    <property type="match status" value="1"/>
</dbReference>
<dbReference type="PANTHER" id="PTHR43546:SF3">
    <property type="entry name" value="UPF0173 METAL-DEPENDENT HYDROLASE MJ1163"/>
    <property type="match status" value="1"/>
</dbReference>
<dbReference type="PANTHER" id="PTHR43546">
    <property type="entry name" value="UPF0173 METAL-DEPENDENT HYDROLASE MJ1163-RELATED"/>
    <property type="match status" value="1"/>
</dbReference>
<dbReference type="Pfam" id="PF12706">
    <property type="entry name" value="Lactamase_B_2"/>
    <property type="match status" value="1"/>
</dbReference>
<dbReference type="SMART" id="SM00849">
    <property type="entry name" value="Lactamase_B"/>
    <property type="match status" value="1"/>
</dbReference>
<dbReference type="SUPFAM" id="SSF56281">
    <property type="entry name" value="Metallo-hydrolase/oxidoreductase"/>
    <property type="match status" value="1"/>
</dbReference>